<dbReference type="EC" id="2.7.12.2"/>
<dbReference type="EMBL" id="AC007767">
    <property type="protein sequence ID" value="AAF81327.1"/>
    <property type="molecule type" value="Genomic_DNA"/>
</dbReference>
<dbReference type="EMBL" id="AC084110">
    <property type="protein sequence ID" value="AAG60170.1"/>
    <property type="molecule type" value="Genomic_DNA"/>
</dbReference>
<dbReference type="EMBL" id="CP002684">
    <property type="protein sequence ID" value="AEE31463.1"/>
    <property type="molecule type" value="Genomic_DNA"/>
</dbReference>
<dbReference type="EMBL" id="DQ446313">
    <property type="protein sequence ID" value="ABE65677.1"/>
    <property type="molecule type" value="mRNA"/>
</dbReference>
<dbReference type="EMBL" id="DQ652874">
    <property type="protein sequence ID" value="ABK28427.1"/>
    <property type="status" value="ALT_SEQ"/>
    <property type="molecule type" value="mRNA"/>
</dbReference>
<dbReference type="PIR" id="G86447">
    <property type="entry name" value="G86447"/>
</dbReference>
<dbReference type="RefSeq" id="NP_174510.1">
    <property type="nucleotide sequence ID" value="NM_102965.1"/>
</dbReference>
<dbReference type="SMR" id="Q9LQM8"/>
<dbReference type="BioGRID" id="25358">
    <property type="interactions" value="10"/>
</dbReference>
<dbReference type="FunCoup" id="Q9LQM8">
    <property type="interactions" value="103"/>
</dbReference>
<dbReference type="IntAct" id="Q9LQM8">
    <property type="interactions" value="9"/>
</dbReference>
<dbReference type="STRING" id="3702.Q9LQM8"/>
<dbReference type="PaxDb" id="3702-AT1G32320.1"/>
<dbReference type="EnsemblPlants" id="AT1G32320.1">
    <property type="protein sequence ID" value="AT1G32320.1"/>
    <property type="gene ID" value="AT1G32320"/>
</dbReference>
<dbReference type="GeneID" id="840124"/>
<dbReference type="Gramene" id="AT1G32320.1">
    <property type="protein sequence ID" value="AT1G32320.1"/>
    <property type="gene ID" value="AT1G32320"/>
</dbReference>
<dbReference type="KEGG" id="ath:AT1G32320"/>
<dbReference type="Araport" id="AT1G32320"/>
<dbReference type="TAIR" id="AT1G32320">
    <property type="gene designation" value="MKK10"/>
</dbReference>
<dbReference type="eggNOG" id="KOG0581">
    <property type="taxonomic scope" value="Eukaryota"/>
</dbReference>
<dbReference type="HOGENOM" id="CLU_000288_63_23_1"/>
<dbReference type="InParanoid" id="Q9LQM8"/>
<dbReference type="OMA" id="CFVMELM"/>
<dbReference type="OrthoDB" id="10252354at2759"/>
<dbReference type="PhylomeDB" id="Q9LQM8"/>
<dbReference type="PRO" id="PR:Q9LQM8"/>
<dbReference type="Proteomes" id="UP000006548">
    <property type="component" value="Chromosome 1"/>
</dbReference>
<dbReference type="ExpressionAtlas" id="Q9LQM8">
    <property type="expression patterns" value="baseline and differential"/>
</dbReference>
<dbReference type="GO" id="GO:0005524">
    <property type="term" value="F:ATP binding"/>
    <property type="evidence" value="ECO:0007669"/>
    <property type="project" value="UniProtKB-KW"/>
</dbReference>
<dbReference type="GO" id="GO:0004708">
    <property type="term" value="F:MAP kinase kinase activity"/>
    <property type="evidence" value="ECO:0000304"/>
    <property type="project" value="TAIR"/>
</dbReference>
<dbReference type="GO" id="GO:0106310">
    <property type="term" value="F:protein serine kinase activity"/>
    <property type="evidence" value="ECO:0007669"/>
    <property type="project" value="RHEA"/>
</dbReference>
<dbReference type="GO" id="GO:0004674">
    <property type="term" value="F:protein serine/threonine kinase activity"/>
    <property type="evidence" value="ECO:0007669"/>
    <property type="project" value="UniProtKB-KW"/>
</dbReference>
<dbReference type="GO" id="GO:0004713">
    <property type="term" value="F:protein tyrosine kinase activity"/>
    <property type="evidence" value="ECO:0007669"/>
    <property type="project" value="RHEA"/>
</dbReference>
<dbReference type="Gene3D" id="1.10.510.10">
    <property type="entry name" value="Transferase(Phosphotransferase) domain 1"/>
    <property type="match status" value="1"/>
</dbReference>
<dbReference type="InterPro" id="IPR011009">
    <property type="entry name" value="Kinase-like_dom_sf"/>
</dbReference>
<dbReference type="InterPro" id="IPR000719">
    <property type="entry name" value="Prot_kinase_dom"/>
</dbReference>
<dbReference type="InterPro" id="IPR017441">
    <property type="entry name" value="Protein_kinase_ATP_BS"/>
</dbReference>
<dbReference type="InterPro" id="IPR008271">
    <property type="entry name" value="Ser/Thr_kinase_AS"/>
</dbReference>
<dbReference type="InterPro" id="IPR053235">
    <property type="entry name" value="Ser_Thr_kinase"/>
</dbReference>
<dbReference type="PANTHER" id="PTHR24361">
    <property type="entry name" value="MITOGEN-ACTIVATED KINASE KINASE KINASE"/>
    <property type="match status" value="1"/>
</dbReference>
<dbReference type="PANTHER" id="PTHR24361:SF747">
    <property type="entry name" value="MITOGEN-ACTIVATED PROTEIN KINASE KINASE 10"/>
    <property type="match status" value="1"/>
</dbReference>
<dbReference type="Pfam" id="PF00069">
    <property type="entry name" value="Pkinase"/>
    <property type="match status" value="1"/>
</dbReference>
<dbReference type="SMART" id="SM00220">
    <property type="entry name" value="S_TKc"/>
    <property type="match status" value="1"/>
</dbReference>
<dbReference type="SUPFAM" id="SSF56112">
    <property type="entry name" value="Protein kinase-like (PK-like)"/>
    <property type="match status" value="1"/>
</dbReference>
<dbReference type="PROSITE" id="PS00107">
    <property type="entry name" value="PROTEIN_KINASE_ATP"/>
    <property type="match status" value="1"/>
</dbReference>
<dbReference type="PROSITE" id="PS50011">
    <property type="entry name" value="PROTEIN_KINASE_DOM"/>
    <property type="match status" value="1"/>
</dbReference>
<dbReference type="PROSITE" id="PS00108">
    <property type="entry name" value="PROTEIN_KINASE_ST"/>
    <property type="match status" value="1"/>
</dbReference>
<feature type="chain" id="PRO_0000428626" description="Mitogen-activated protein kinase kinase 10">
    <location>
        <begin position="1"/>
        <end position="305"/>
    </location>
</feature>
<feature type="domain" description="Protein kinase" evidence="3">
    <location>
        <begin position="48"/>
        <end position="302"/>
    </location>
</feature>
<feature type="active site" description="Proton acceptor" evidence="3 4">
    <location>
        <position position="165"/>
    </location>
</feature>
<feature type="binding site" evidence="3">
    <location>
        <begin position="54"/>
        <end position="62"/>
    </location>
    <ligand>
        <name>ATP</name>
        <dbReference type="ChEBI" id="CHEBI:30616"/>
    </ligand>
</feature>
<feature type="binding site" evidence="3">
    <location>
        <position position="77"/>
    </location>
    <ligand>
        <name>ATP</name>
        <dbReference type="ChEBI" id="CHEBI:30616"/>
    </ligand>
</feature>
<feature type="modified residue" description="Phosphoserine" evidence="2">
    <location>
        <position position="34"/>
    </location>
</feature>
<feature type="modified residue" description="Phosphothreonine" evidence="1">
    <location>
        <position position="200"/>
    </location>
</feature>
<reference key="1">
    <citation type="journal article" date="2000" name="Nature">
        <title>Sequence and analysis of chromosome 1 of the plant Arabidopsis thaliana.</title>
        <authorList>
            <person name="Theologis A."/>
            <person name="Ecker J.R."/>
            <person name="Palm C.J."/>
            <person name="Federspiel N.A."/>
            <person name="Kaul S."/>
            <person name="White O."/>
            <person name="Alonso J."/>
            <person name="Altafi H."/>
            <person name="Araujo R."/>
            <person name="Bowman C.L."/>
            <person name="Brooks S.Y."/>
            <person name="Buehler E."/>
            <person name="Chan A."/>
            <person name="Chao Q."/>
            <person name="Chen H."/>
            <person name="Cheuk R.F."/>
            <person name="Chin C.W."/>
            <person name="Chung M.K."/>
            <person name="Conn L."/>
            <person name="Conway A.B."/>
            <person name="Conway A.R."/>
            <person name="Creasy T.H."/>
            <person name="Dewar K."/>
            <person name="Dunn P."/>
            <person name="Etgu P."/>
            <person name="Feldblyum T.V."/>
            <person name="Feng J.-D."/>
            <person name="Fong B."/>
            <person name="Fujii C.Y."/>
            <person name="Gill J.E."/>
            <person name="Goldsmith A.D."/>
            <person name="Haas B."/>
            <person name="Hansen N.F."/>
            <person name="Hughes B."/>
            <person name="Huizar L."/>
            <person name="Hunter J.L."/>
            <person name="Jenkins J."/>
            <person name="Johnson-Hopson C."/>
            <person name="Khan S."/>
            <person name="Khaykin E."/>
            <person name="Kim C.J."/>
            <person name="Koo H.L."/>
            <person name="Kremenetskaia I."/>
            <person name="Kurtz D.B."/>
            <person name="Kwan A."/>
            <person name="Lam B."/>
            <person name="Langin-Hooper S."/>
            <person name="Lee A."/>
            <person name="Lee J.M."/>
            <person name="Lenz C.A."/>
            <person name="Li J.H."/>
            <person name="Li Y.-P."/>
            <person name="Lin X."/>
            <person name="Liu S.X."/>
            <person name="Liu Z.A."/>
            <person name="Luros J.S."/>
            <person name="Maiti R."/>
            <person name="Marziali A."/>
            <person name="Militscher J."/>
            <person name="Miranda M."/>
            <person name="Nguyen M."/>
            <person name="Nierman W.C."/>
            <person name="Osborne B.I."/>
            <person name="Pai G."/>
            <person name="Peterson J."/>
            <person name="Pham P.K."/>
            <person name="Rizzo M."/>
            <person name="Rooney T."/>
            <person name="Rowley D."/>
            <person name="Sakano H."/>
            <person name="Salzberg S.L."/>
            <person name="Schwartz J.R."/>
            <person name="Shinn P."/>
            <person name="Southwick A.M."/>
            <person name="Sun H."/>
            <person name="Tallon L.J."/>
            <person name="Tambunga G."/>
            <person name="Toriumi M.J."/>
            <person name="Town C.D."/>
            <person name="Utterback T."/>
            <person name="Van Aken S."/>
            <person name="Vaysberg M."/>
            <person name="Vysotskaia V.S."/>
            <person name="Walker M."/>
            <person name="Wu D."/>
            <person name="Yu G."/>
            <person name="Fraser C.M."/>
            <person name="Venter J.C."/>
            <person name="Davis R.W."/>
        </authorList>
    </citation>
    <scope>NUCLEOTIDE SEQUENCE [LARGE SCALE GENOMIC DNA]</scope>
    <source>
        <strain>cv. Columbia</strain>
    </source>
</reference>
<reference key="2">
    <citation type="journal article" date="2017" name="Plant J.">
        <title>Araport11: a complete reannotation of the Arabidopsis thaliana reference genome.</title>
        <authorList>
            <person name="Cheng C.Y."/>
            <person name="Krishnakumar V."/>
            <person name="Chan A.P."/>
            <person name="Thibaud-Nissen F."/>
            <person name="Schobel S."/>
            <person name="Town C.D."/>
        </authorList>
    </citation>
    <scope>GENOME REANNOTATION</scope>
    <source>
        <strain>cv. Columbia</strain>
    </source>
</reference>
<reference key="3">
    <citation type="journal article" date="2006" name="Plant Biotechnol. J.">
        <title>Simultaneous high-throughput recombinational cloning of open reading frames in closed and open configurations.</title>
        <authorList>
            <person name="Underwood B.A."/>
            <person name="Vanderhaeghen R."/>
            <person name="Whitford R."/>
            <person name="Town C.D."/>
            <person name="Hilson P."/>
        </authorList>
    </citation>
    <scope>NUCLEOTIDE SEQUENCE [LARGE SCALE MRNA]</scope>
    <source>
        <strain>cv. Columbia</strain>
    </source>
</reference>
<reference key="4">
    <citation type="journal article" date="2002" name="Trends Plant Sci.">
        <title>Mitogen-activated protein kinase cascades in plants: a new nomenclature.</title>
        <authorList>
            <consortium name="MAPK group"/>
        </authorList>
    </citation>
    <scope>GENE FAMILY</scope>
    <scope>NOMENCLATURE</scope>
</reference>
<reference key="5">
    <citation type="journal article" date="2006" name="Trends Plant Sci.">
        <title>Ancient signals: comparative genomics of plant MAPK and MAPKK gene families.</title>
        <authorList>
            <person name="Hamel L.P."/>
            <person name="Nicole M.C."/>
            <person name="Sritubtim S."/>
            <person name="Morency M.J."/>
            <person name="Ellis M."/>
            <person name="Ehlting J."/>
            <person name="Beaudoin N."/>
            <person name="Barbazuk B."/>
            <person name="Klessig D."/>
            <person name="Lee J."/>
            <person name="Martin G."/>
            <person name="Mundy J."/>
            <person name="Ohashi Y."/>
            <person name="Scheel D."/>
            <person name="Sheen J."/>
            <person name="Xing T."/>
            <person name="Zhang S."/>
            <person name="Seguin A."/>
            <person name="Ellis B.E."/>
        </authorList>
    </citation>
    <scope>GENE FAMILY</scope>
</reference>
<reference key="6">
    <citation type="journal article" date="2010" name="Plant Cell">
        <title>A Pseudomonas syringae ADP-ribosyltransferase inhibits Arabidopsis mitogen-activated protein kinase kinases.</title>
        <authorList>
            <person name="Wang Y."/>
            <person name="Li J."/>
            <person name="Hou S."/>
            <person name="Wang X."/>
            <person name="Li Y."/>
            <person name="Ren D."/>
            <person name="Chen S."/>
            <person name="Tang X."/>
            <person name="Zhou J.M."/>
        </authorList>
    </citation>
    <scope>INTERACTION WITH P.SYRINGAE HOPF2</scope>
</reference>
<keyword id="KW-0067">ATP-binding</keyword>
<keyword id="KW-0418">Kinase</keyword>
<keyword id="KW-0547">Nucleotide-binding</keyword>
<keyword id="KW-0597">Phosphoprotein</keyword>
<keyword id="KW-1185">Reference proteome</keyword>
<keyword id="KW-0723">Serine/threonine-protein kinase</keyword>
<keyword id="KW-0808">Transferase</keyword>
<evidence type="ECO:0000250" key="1">
    <source>
        <dbReference type="UniProtKB" id="O80397"/>
    </source>
</evidence>
<evidence type="ECO:0000250" key="2">
    <source>
        <dbReference type="UniProtKB" id="Q9S7U9"/>
    </source>
</evidence>
<evidence type="ECO:0000255" key="3">
    <source>
        <dbReference type="PROSITE-ProRule" id="PRU00159"/>
    </source>
</evidence>
<evidence type="ECO:0000255" key="4">
    <source>
        <dbReference type="PROSITE-ProRule" id="PRU10027"/>
    </source>
</evidence>
<evidence type="ECO:0000269" key="5">
    <source>
    </source>
</evidence>
<evidence type="ECO:0000305" key="6"/>
<organism>
    <name type="scientific">Arabidopsis thaliana</name>
    <name type="common">Mouse-ear cress</name>
    <dbReference type="NCBI Taxonomy" id="3702"/>
    <lineage>
        <taxon>Eukaryota</taxon>
        <taxon>Viridiplantae</taxon>
        <taxon>Streptophyta</taxon>
        <taxon>Embryophyta</taxon>
        <taxon>Tracheophyta</taxon>
        <taxon>Spermatophyta</taxon>
        <taxon>Magnoliopsida</taxon>
        <taxon>eudicotyledons</taxon>
        <taxon>Gunneridae</taxon>
        <taxon>Pentapetalae</taxon>
        <taxon>rosids</taxon>
        <taxon>malvids</taxon>
        <taxon>Brassicales</taxon>
        <taxon>Brassicaceae</taxon>
        <taxon>Camelineae</taxon>
        <taxon>Arabidopsis</taxon>
    </lineage>
</organism>
<gene>
    <name type="primary">MKK10</name>
    <name type="ordered locus">At1g32320</name>
    <name type="ORF">F27G20_9</name>
    <name type="ORF">F5D14.7</name>
</gene>
<sequence length="305" mass="34022">MTLVRERRHQEPLTLSIPPLIYHGTAFSVASSSSSSPETSPIQTLNDLEKLSVLGQGSGGTVYKTRHRRTKTLYALKVLRPNLNTTVTVEADILKRIESSFIIKCYAVFVSLYDLCFVMELMEKGSLHDALLAQQVFSEPMVSSLANRILQGLRYLQKMGIVHGDIKPSNLLINKKGEVKIADFGASRIVAGGDYGSNGTCAYMSPERVDLEKWGFGGEVGFAGDVWSLGVVVLECYIGRYPLTKVGDKPDWATLFCAICCNEKVDIPVSCSLEFRDFVGRCLEKDWRKRDTVEELLRHSFVKNR</sequence>
<accession>Q9LQM8</accession>
<accession>A0MEA5</accession>
<name>M2K10_ARATH</name>
<proteinExistence type="evidence at protein level"/>
<protein>
    <recommendedName>
        <fullName>Mitogen-activated protein kinase kinase 10</fullName>
        <shortName>AtMKK10</shortName>
        <shortName>MAP kinase kinase 10</shortName>
        <ecNumber>2.7.12.2</ecNumber>
    </recommendedName>
</protein>
<comment type="catalytic activity">
    <reaction>
        <text>L-seryl-[protein] + ATP = O-phospho-L-seryl-[protein] + ADP + H(+)</text>
        <dbReference type="Rhea" id="RHEA:17989"/>
        <dbReference type="Rhea" id="RHEA-COMP:9863"/>
        <dbReference type="Rhea" id="RHEA-COMP:11604"/>
        <dbReference type="ChEBI" id="CHEBI:15378"/>
        <dbReference type="ChEBI" id="CHEBI:29999"/>
        <dbReference type="ChEBI" id="CHEBI:30616"/>
        <dbReference type="ChEBI" id="CHEBI:83421"/>
        <dbReference type="ChEBI" id="CHEBI:456216"/>
        <dbReference type="EC" id="2.7.12.2"/>
    </reaction>
</comment>
<comment type="catalytic activity">
    <reaction>
        <text>L-threonyl-[protein] + ATP = O-phospho-L-threonyl-[protein] + ADP + H(+)</text>
        <dbReference type="Rhea" id="RHEA:46608"/>
        <dbReference type="Rhea" id="RHEA-COMP:11060"/>
        <dbReference type="Rhea" id="RHEA-COMP:11605"/>
        <dbReference type="ChEBI" id="CHEBI:15378"/>
        <dbReference type="ChEBI" id="CHEBI:30013"/>
        <dbReference type="ChEBI" id="CHEBI:30616"/>
        <dbReference type="ChEBI" id="CHEBI:61977"/>
        <dbReference type="ChEBI" id="CHEBI:456216"/>
        <dbReference type="EC" id="2.7.12.2"/>
    </reaction>
</comment>
<comment type="catalytic activity">
    <reaction>
        <text>L-tyrosyl-[protein] + ATP = O-phospho-L-tyrosyl-[protein] + ADP + H(+)</text>
        <dbReference type="Rhea" id="RHEA:10596"/>
        <dbReference type="Rhea" id="RHEA-COMP:10136"/>
        <dbReference type="Rhea" id="RHEA-COMP:20101"/>
        <dbReference type="ChEBI" id="CHEBI:15378"/>
        <dbReference type="ChEBI" id="CHEBI:30616"/>
        <dbReference type="ChEBI" id="CHEBI:46858"/>
        <dbReference type="ChEBI" id="CHEBI:61978"/>
        <dbReference type="ChEBI" id="CHEBI:456216"/>
        <dbReference type="EC" id="2.7.12.2"/>
    </reaction>
</comment>
<comment type="subunit">
    <text evidence="5">Interacts with P.syringae type III effector HopF2.</text>
</comment>
<comment type="similarity">
    <text evidence="6">Belongs to the protein kinase superfamily. STE Ser/Thr protein kinase family. MAP kinase kinase subfamily.</text>
</comment>
<comment type="sequence caution" evidence="6">
    <conflict type="erroneous termination">
        <sequence resource="EMBL-CDS" id="ABK28427"/>
    </conflict>
    <text>Extended C-terminus.</text>
</comment>